<proteinExistence type="inferred from homology"/>
<feature type="chain" id="PRO_1000147794" description="Leucyl/phenylalanyl-tRNA--protein transferase">
    <location>
        <begin position="1"/>
        <end position="214"/>
    </location>
</feature>
<gene>
    <name evidence="1" type="primary">aat</name>
    <name type="ordered locus">RSKD131_1532</name>
</gene>
<organism>
    <name type="scientific">Cereibacter sphaeroides (strain KD131 / KCTC 12085)</name>
    <name type="common">Rhodobacter sphaeroides</name>
    <dbReference type="NCBI Taxonomy" id="557760"/>
    <lineage>
        <taxon>Bacteria</taxon>
        <taxon>Pseudomonadati</taxon>
        <taxon>Pseudomonadota</taxon>
        <taxon>Alphaproteobacteria</taxon>
        <taxon>Rhodobacterales</taxon>
        <taxon>Paracoccaceae</taxon>
        <taxon>Cereibacter</taxon>
    </lineage>
</organism>
<keyword id="KW-0012">Acyltransferase</keyword>
<keyword id="KW-0963">Cytoplasm</keyword>
<keyword id="KW-0808">Transferase</keyword>
<reference key="1">
    <citation type="journal article" date="2009" name="J. Bacteriol.">
        <title>Complete genome sequence of Rhodobacter sphaeroides KD131.</title>
        <authorList>
            <person name="Lim S.-K."/>
            <person name="Kim S.J."/>
            <person name="Cha S.H."/>
            <person name="Oh Y.-K."/>
            <person name="Rhee H.-J."/>
            <person name="Kim M.-S."/>
            <person name="Lee J.K."/>
        </authorList>
    </citation>
    <scope>NUCLEOTIDE SEQUENCE [LARGE SCALE GENOMIC DNA]</scope>
    <source>
        <strain>KD131 / KCTC 12085</strain>
    </source>
</reference>
<accession>B9KJU5</accession>
<name>LFTR_CERSK</name>
<evidence type="ECO:0000255" key="1">
    <source>
        <dbReference type="HAMAP-Rule" id="MF_00688"/>
    </source>
</evidence>
<protein>
    <recommendedName>
        <fullName evidence="1">Leucyl/phenylalanyl-tRNA--protein transferase</fullName>
        <ecNumber evidence="1">2.3.2.6</ecNumber>
    </recommendedName>
    <alternativeName>
        <fullName evidence="1">L/F-transferase</fullName>
    </alternativeName>
    <alternativeName>
        <fullName evidence="1">Leucyltransferase</fullName>
    </alternativeName>
    <alternativeName>
        <fullName evidence="1">Phenyalanyltransferase</fullName>
    </alternativeName>
</protein>
<dbReference type="EC" id="2.3.2.6" evidence="1"/>
<dbReference type="EMBL" id="CP001150">
    <property type="protein sequence ID" value="ACM01392.1"/>
    <property type="molecule type" value="Genomic_DNA"/>
</dbReference>
<dbReference type="RefSeq" id="WP_015920800.1">
    <property type="nucleotide sequence ID" value="NC_011963.1"/>
</dbReference>
<dbReference type="SMR" id="B9KJU5"/>
<dbReference type="GeneID" id="67446941"/>
<dbReference type="KEGG" id="rsk:RSKD131_1532"/>
<dbReference type="HOGENOM" id="CLU_075045_1_1_5"/>
<dbReference type="GO" id="GO:0005737">
    <property type="term" value="C:cytoplasm"/>
    <property type="evidence" value="ECO:0007669"/>
    <property type="project" value="UniProtKB-SubCell"/>
</dbReference>
<dbReference type="GO" id="GO:0008914">
    <property type="term" value="F:leucyl-tRNA--protein transferase activity"/>
    <property type="evidence" value="ECO:0007669"/>
    <property type="project" value="UniProtKB-UniRule"/>
</dbReference>
<dbReference type="GO" id="GO:0030163">
    <property type="term" value="P:protein catabolic process"/>
    <property type="evidence" value="ECO:0007669"/>
    <property type="project" value="UniProtKB-UniRule"/>
</dbReference>
<dbReference type="FunFam" id="3.40.630.70:FF:000001">
    <property type="entry name" value="Leucyl/phenylalanyl-tRNA--protein transferase"/>
    <property type="match status" value="1"/>
</dbReference>
<dbReference type="Gene3D" id="3.40.630.70">
    <property type="entry name" value="Leucyl/phenylalanyl-tRNA-protein transferase, C-terminal domain"/>
    <property type="match status" value="1"/>
</dbReference>
<dbReference type="HAMAP" id="MF_00688">
    <property type="entry name" value="Leu_Phe_trans"/>
    <property type="match status" value="1"/>
</dbReference>
<dbReference type="InterPro" id="IPR016181">
    <property type="entry name" value="Acyl_CoA_acyltransferase"/>
</dbReference>
<dbReference type="InterPro" id="IPR004616">
    <property type="entry name" value="Leu/Phe-tRNA_Trfase"/>
</dbReference>
<dbReference type="InterPro" id="IPR042203">
    <property type="entry name" value="Leu/Phe-tRNA_Trfase_C"/>
</dbReference>
<dbReference type="NCBIfam" id="TIGR00667">
    <property type="entry name" value="aat"/>
    <property type="match status" value="1"/>
</dbReference>
<dbReference type="PANTHER" id="PTHR30098">
    <property type="entry name" value="LEUCYL/PHENYLALANYL-TRNA--PROTEIN TRANSFERASE"/>
    <property type="match status" value="1"/>
</dbReference>
<dbReference type="PANTHER" id="PTHR30098:SF2">
    <property type="entry name" value="LEUCYL_PHENYLALANYL-TRNA--PROTEIN TRANSFERASE"/>
    <property type="match status" value="1"/>
</dbReference>
<dbReference type="Pfam" id="PF03588">
    <property type="entry name" value="Leu_Phe_trans"/>
    <property type="match status" value="1"/>
</dbReference>
<dbReference type="SUPFAM" id="SSF55729">
    <property type="entry name" value="Acyl-CoA N-acyltransferases (Nat)"/>
    <property type="match status" value="1"/>
</dbReference>
<sequence length="214" mass="24210">MRPPALTPRLLLRAYALGIFPMAESRDDPEIHWIDPRHRGIFPLDEFHISRSLARRIRRMDWRVGVNEDFAATVEACADREETWINPTIFRLYVELHALGHAHSLEVREGETLVGGVYGVTLGRAFFGESMFSRRTDASKVALAFLIDRLRAGGFTLFDTQFLTPHLASLGAIEIRRSDYHQRLTEALAGNASFTPEGYWADPASVVQRNSQTS</sequence>
<comment type="function">
    <text evidence="1">Functions in the N-end rule pathway of protein degradation where it conjugates Leu, Phe and, less efficiently, Met from aminoacyl-tRNAs to the N-termini of proteins containing an N-terminal arginine or lysine.</text>
</comment>
<comment type="catalytic activity">
    <reaction evidence="1">
        <text>N-terminal L-lysyl-[protein] + L-leucyl-tRNA(Leu) = N-terminal L-leucyl-L-lysyl-[protein] + tRNA(Leu) + H(+)</text>
        <dbReference type="Rhea" id="RHEA:12340"/>
        <dbReference type="Rhea" id="RHEA-COMP:9613"/>
        <dbReference type="Rhea" id="RHEA-COMP:9622"/>
        <dbReference type="Rhea" id="RHEA-COMP:12670"/>
        <dbReference type="Rhea" id="RHEA-COMP:12671"/>
        <dbReference type="ChEBI" id="CHEBI:15378"/>
        <dbReference type="ChEBI" id="CHEBI:65249"/>
        <dbReference type="ChEBI" id="CHEBI:78442"/>
        <dbReference type="ChEBI" id="CHEBI:78494"/>
        <dbReference type="ChEBI" id="CHEBI:133043"/>
        <dbReference type="EC" id="2.3.2.6"/>
    </reaction>
</comment>
<comment type="catalytic activity">
    <reaction evidence="1">
        <text>N-terminal L-arginyl-[protein] + L-leucyl-tRNA(Leu) = N-terminal L-leucyl-L-arginyl-[protein] + tRNA(Leu) + H(+)</text>
        <dbReference type="Rhea" id="RHEA:50416"/>
        <dbReference type="Rhea" id="RHEA-COMP:9613"/>
        <dbReference type="Rhea" id="RHEA-COMP:9622"/>
        <dbReference type="Rhea" id="RHEA-COMP:12672"/>
        <dbReference type="Rhea" id="RHEA-COMP:12673"/>
        <dbReference type="ChEBI" id="CHEBI:15378"/>
        <dbReference type="ChEBI" id="CHEBI:64719"/>
        <dbReference type="ChEBI" id="CHEBI:78442"/>
        <dbReference type="ChEBI" id="CHEBI:78494"/>
        <dbReference type="ChEBI" id="CHEBI:133044"/>
        <dbReference type="EC" id="2.3.2.6"/>
    </reaction>
</comment>
<comment type="catalytic activity">
    <reaction evidence="1">
        <text>L-phenylalanyl-tRNA(Phe) + an N-terminal L-alpha-aminoacyl-[protein] = an N-terminal L-phenylalanyl-L-alpha-aminoacyl-[protein] + tRNA(Phe)</text>
        <dbReference type="Rhea" id="RHEA:43632"/>
        <dbReference type="Rhea" id="RHEA-COMP:9668"/>
        <dbReference type="Rhea" id="RHEA-COMP:9699"/>
        <dbReference type="Rhea" id="RHEA-COMP:10636"/>
        <dbReference type="Rhea" id="RHEA-COMP:10637"/>
        <dbReference type="ChEBI" id="CHEBI:78442"/>
        <dbReference type="ChEBI" id="CHEBI:78531"/>
        <dbReference type="ChEBI" id="CHEBI:78597"/>
        <dbReference type="ChEBI" id="CHEBI:83561"/>
        <dbReference type="EC" id="2.3.2.6"/>
    </reaction>
</comment>
<comment type="subcellular location">
    <subcellularLocation>
        <location evidence="1">Cytoplasm</location>
    </subcellularLocation>
</comment>
<comment type="similarity">
    <text evidence="1">Belongs to the L/F-transferase family.</text>
</comment>